<organism>
    <name type="scientific">Caulobacter sp. (strain K31)</name>
    <dbReference type="NCBI Taxonomy" id="366602"/>
    <lineage>
        <taxon>Bacteria</taxon>
        <taxon>Pseudomonadati</taxon>
        <taxon>Pseudomonadota</taxon>
        <taxon>Alphaproteobacteria</taxon>
        <taxon>Caulobacterales</taxon>
        <taxon>Caulobacteraceae</taxon>
        <taxon>Caulobacter</taxon>
    </lineage>
</organism>
<evidence type="ECO:0000255" key="1">
    <source>
        <dbReference type="HAMAP-Rule" id="MF_00531"/>
    </source>
</evidence>
<evidence type="ECO:0000305" key="2"/>
<keyword id="KW-0687">Ribonucleoprotein</keyword>
<keyword id="KW-0689">Ribosomal protein</keyword>
<keyword id="KW-0694">RNA-binding</keyword>
<keyword id="KW-0699">rRNA-binding</keyword>
<dbReference type="EMBL" id="CP000927">
    <property type="protein sequence ID" value="ABZ70747.1"/>
    <property type="molecule type" value="Genomic_DNA"/>
</dbReference>
<dbReference type="SMR" id="B0T2C6"/>
<dbReference type="STRING" id="366602.Caul_1618"/>
<dbReference type="KEGG" id="cak:Caul_1618"/>
<dbReference type="eggNOG" id="COG0185">
    <property type="taxonomic scope" value="Bacteria"/>
</dbReference>
<dbReference type="HOGENOM" id="CLU_144911_0_1_5"/>
<dbReference type="OrthoDB" id="9797833at2"/>
<dbReference type="GO" id="GO:0005737">
    <property type="term" value="C:cytoplasm"/>
    <property type="evidence" value="ECO:0007669"/>
    <property type="project" value="UniProtKB-ARBA"/>
</dbReference>
<dbReference type="GO" id="GO:0015935">
    <property type="term" value="C:small ribosomal subunit"/>
    <property type="evidence" value="ECO:0007669"/>
    <property type="project" value="InterPro"/>
</dbReference>
<dbReference type="GO" id="GO:0019843">
    <property type="term" value="F:rRNA binding"/>
    <property type="evidence" value="ECO:0007669"/>
    <property type="project" value="UniProtKB-UniRule"/>
</dbReference>
<dbReference type="GO" id="GO:0003735">
    <property type="term" value="F:structural constituent of ribosome"/>
    <property type="evidence" value="ECO:0007669"/>
    <property type="project" value="InterPro"/>
</dbReference>
<dbReference type="GO" id="GO:0000028">
    <property type="term" value="P:ribosomal small subunit assembly"/>
    <property type="evidence" value="ECO:0007669"/>
    <property type="project" value="TreeGrafter"/>
</dbReference>
<dbReference type="GO" id="GO:0006412">
    <property type="term" value="P:translation"/>
    <property type="evidence" value="ECO:0007669"/>
    <property type="project" value="UniProtKB-UniRule"/>
</dbReference>
<dbReference type="FunFam" id="3.30.860.10:FF:000001">
    <property type="entry name" value="30S ribosomal protein S19"/>
    <property type="match status" value="1"/>
</dbReference>
<dbReference type="Gene3D" id="3.30.860.10">
    <property type="entry name" value="30s Ribosomal Protein S19, Chain A"/>
    <property type="match status" value="1"/>
</dbReference>
<dbReference type="HAMAP" id="MF_00531">
    <property type="entry name" value="Ribosomal_uS19"/>
    <property type="match status" value="1"/>
</dbReference>
<dbReference type="InterPro" id="IPR002222">
    <property type="entry name" value="Ribosomal_uS19"/>
</dbReference>
<dbReference type="InterPro" id="IPR005732">
    <property type="entry name" value="Ribosomal_uS19_bac-type"/>
</dbReference>
<dbReference type="InterPro" id="IPR020934">
    <property type="entry name" value="Ribosomal_uS19_CS"/>
</dbReference>
<dbReference type="InterPro" id="IPR023575">
    <property type="entry name" value="Ribosomal_uS19_SF"/>
</dbReference>
<dbReference type="NCBIfam" id="TIGR01050">
    <property type="entry name" value="rpsS_bact"/>
    <property type="match status" value="1"/>
</dbReference>
<dbReference type="PANTHER" id="PTHR11880">
    <property type="entry name" value="RIBOSOMAL PROTEIN S19P FAMILY MEMBER"/>
    <property type="match status" value="1"/>
</dbReference>
<dbReference type="PANTHER" id="PTHR11880:SF8">
    <property type="entry name" value="SMALL RIBOSOMAL SUBUNIT PROTEIN US19M"/>
    <property type="match status" value="1"/>
</dbReference>
<dbReference type="Pfam" id="PF00203">
    <property type="entry name" value="Ribosomal_S19"/>
    <property type="match status" value="1"/>
</dbReference>
<dbReference type="PIRSF" id="PIRSF002144">
    <property type="entry name" value="Ribosomal_S19"/>
    <property type="match status" value="1"/>
</dbReference>
<dbReference type="PRINTS" id="PR00975">
    <property type="entry name" value="RIBOSOMALS19"/>
</dbReference>
<dbReference type="SUPFAM" id="SSF54570">
    <property type="entry name" value="Ribosomal protein S19"/>
    <property type="match status" value="1"/>
</dbReference>
<dbReference type="PROSITE" id="PS00323">
    <property type="entry name" value="RIBOSOMAL_S19"/>
    <property type="match status" value="1"/>
</dbReference>
<comment type="function">
    <text evidence="1">Protein S19 forms a complex with S13 that binds strongly to the 16S ribosomal RNA.</text>
</comment>
<comment type="similarity">
    <text evidence="1">Belongs to the universal ribosomal protein uS19 family.</text>
</comment>
<sequence length="92" mass="10203">MTRSVWKGPFVDGYLLKKADAALASGRKDVIKTWSRRSTIMPQFVGLVFGVHNGQKHVPVSVSEDMVGMKFGEFAPTRNFPGHAADKKAKRK</sequence>
<name>RS19_CAUSK</name>
<gene>
    <name evidence="1" type="primary">rpsS</name>
    <name type="ordered locus">Caul_1618</name>
</gene>
<feature type="chain" id="PRO_1000081761" description="Small ribosomal subunit protein uS19">
    <location>
        <begin position="1"/>
        <end position="92"/>
    </location>
</feature>
<protein>
    <recommendedName>
        <fullName evidence="1">Small ribosomal subunit protein uS19</fullName>
    </recommendedName>
    <alternativeName>
        <fullName evidence="2">30S ribosomal protein S19</fullName>
    </alternativeName>
</protein>
<reference key="1">
    <citation type="submission" date="2008-01" db="EMBL/GenBank/DDBJ databases">
        <title>Complete sequence of chromosome of Caulobacter sp. K31.</title>
        <authorList>
            <consortium name="US DOE Joint Genome Institute"/>
            <person name="Copeland A."/>
            <person name="Lucas S."/>
            <person name="Lapidus A."/>
            <person name="Barry K."/>
            <person name="Glavina del Rio T."/>
            <person name="Dalin E."/>
            <person name="Tice H."/>
            <person name="Pitluck S."/>
            <person name="Bruce D."/>
            <person name="Goodwin L."/>
            <person name="Thompson L.S."/>
            <person name="Brettin T."/>
            <person name="Detter J.C."/>
            <person name="Han C."/>
            <person name="Schmutz J."/>
            <person name="Larimer F."/>
            <person name="Land M."/>
            <person name="Hauser L."/>
            <person name="Kyrpides N."/>
            <person name="Kim E."/>
            <person name="Stephens C."/>
            <person name="Richardson P."/>
        </authorList>
    </citation>
    <scope>NUCLEOTIDE SEQUENCE [LARGE SCALE GENOMIC DNA]</scope>
    <source>
        <strain>K31</strain>
    </source>
</reference>
<accession>B0T2C6</accession>
<proteinExistence type="inferred from homology"/>